<name>SEC23_EMENI</name>
<feature type="chain" id="PRO_0000295462" description="Protein transport protein sec23">
    <location>
        <begin position="1"/>
        <end position="771"/>
    </location>
</feature>
<feature type="binding site" evidence="1">
    <location>
        <position position="63"/>
    </location>
    <ligand>
        <name>Zn(2+)</name>
        <dbReference type="ChEBI" id="CHEBI:29105"/>
    </ligand>
</feature>
<feature type="binding site" evidence="1">
    <location>
        <position position="67"/>
    </location>
    <ligand>
        <name>Zn(2+)</name>
        <dbReference type="ChEBI" id="CHEBI:29105"/>
    </ligand>
</feature>
<feature type="binding site" evidence="1">
    <location>
        <position position="86"/>
    </location>
    <ligand>
        <name>Zn(2+)</name>
        <dbReference type="ChEBI" id="CHEBI:29105"/>
    </ligand>
</feature>
<feature type="binding site" evidence="1">
    <location>
        <position position="89"/>
    </location>
    <ligand>
        <name>Zn(2+)</name>
        <dbReference type="ChEBI" id="CHEBI:29105"/>
    </ligand>
</feature>
<accession>Q5BGR9</accession>
<accession>C8VUJ3</accession>
<keyword id="KW-0963">Cytoplasm</keyword>
<keyword id="KW-0968">Cytoplasmic vesicle</keyword>
<keyword id="KW-0256">Endoplasmic reticulum</keyword>
<keyword id="KW-0931">ER-Golgi transport</keyword>
<keyword id="KW-0333">Golgi apparatus</keyword>
<keyword id="KW-0472">Membrane</keyword>
<keyword id="KW-0479">Metal-binding</keyword>
<keyword id="KW-0653">Protein transport</keyword>
<keyword id="KW-1185">Reference proteome</keyword>
<keyword id="KW-0813">Transport</keyword>
<keyword id="KW-0862">Zinc</keyword>
<proteinExistence type="inferred from homology"/>
<evidence type="ECO:0000250" key="1"/>
<evidence type="ECO:0000305" key="2"/>
<protein>
    <recommendedName>
        <fullName>Protein transport protein sec23</fullName>
    </recommendedName>
</protein>
<comment type="function">
    <text evidence="1">Component of the coat protein complex II (COPII) which promotes the formation of transport vesicles from the endoplasmic reticulum (ER). The coat has two main functions, the physical deformation of the endoplasmic reticulum membrane into vesicles and the selection of cargo molecules (By similarity).</text>
</comment>
<comment type="subunit">
    <text evidence="1">The COPII coat is composed of at least 5 proteins: the sec23/24 complex, the sec13/31 complex, and the protein sar1.</text>
</comment>
<comment type="subcellular location">
    <subcellularLocation>
        <location evidence="1">Cytoplasm</location>
    </subcellularLocation>
    <subcellularLocation>
        <location evidence="1">Cytoplasmic vesicle</location>
        <location evidence="1">COPII-coated vesicle membrane</location>
        <topology evidence="1">Peripheral membrane protein</topology>
        <orientation evidence="1">Cytoplasmic side</orientation>
    </subcellularLocation>
    <subcellularLocation>
        <location evidence="1">Endoplasmic reticulum membrane</location>
        <topology evidence="1">Peripheral membrane protein</topology>
        <orientation evidence="1">Cytoplasmic side</orientation>
    </subcellularLocation>
    <subcellularLocation>
        <location evidence="1">Golgi apparatus membrane</location>
        <topology evidence="1">Peripheral membrane protein</topology>
        <orientation evidence="1">Cytoplasmic side</orientation>
    </subcellularLocation>
</comment>
<comment type="similarity">
    <text evidence="2">Belongs to the SEC23/SEC24 family. SEC23 subfamily.</text>
</comment>
<sequence>MDYEGLKDQWSDVEDRDGIRLSWNTFPSSRMEASRLVVPIGAIYTPLKERPDAPLLQYEPVTCKAPCRAVLNPYANVDVRARIWICPFCLMRNPLPPHYKDITESTIPPELHPLSTTIEYQLARPAPAPPIFVFVVDTCQEDDSLKAVKDSLILSLSLLPPNALVGLITFGTMAQVHELGYTECAKSYVFRGSKDYNAKQVQEMLGLASGIRPNMPNMPQQPVRPPLGAAARFLLPVQQAEFQITNMLEQLQRDPWPVANDKRPLRCTGVALNVAVGLLESSFQNAGAHIMLFTSGPATEGPGLVVSPELKEPIRSHHDIDRDNIKYYKKALKFYDALAKRAANNGHVVDLFAGCLDQVGLLEMKNLANYTGGHILLTDSFTSSQFKQSFIRVFDKDANDNLLMGFNASLEVLTTKELKVTGLIGHAVSLNKKSSSVGETECGIGNTCAWKMCGIDPSSSYGIYFEIANQGGPAAVQPGPQRGMMQFLTYYQHSSGHFHLRVTTVARNLSGPAGDPTLAQSFDQEAAAVLMARIGVFKAEVDDGPDVLRWVDRMLIRLCSRFADYRKDDPTSFRLEKNFTLYPQFMFHLRRSQFLQVFNNSPDETAFYRHVLNHEDVGDSLIMIQPTLDSYSLEHEGSLPVLLDSASIQPTHILLLDTFFHILIFHGETIAEWRKAGYQDQEGYENLKALLDLPKEDARELISERFPLPRFIVCDAGGSQARFLLSKLNPSTTHTTGGYGGGVSSQTIFTDDVSLQTFMDHLMKLAVSGTS</sequence>
<organism>
    <name type="scientific">Emericella nidulans (strain FGSC A4 / ATCC 38163 / CBS 112.46 / NRRL 194 / M139)</name>
    <name type="common">Aspergillus nidulans</name>
    <dbReference type="NCBI Taxonomy" id="227321"/>
    <lineage>
        <taxon>Eukaryota</taxon>
        <taxon>Fungi</taxon>
        <taxon>Dikarya</taxon>
        <taxon>Ascomycota</taxon>
        <taxon>Pezizomycotina</taxon>
        <taxon>Eurotiomycetes</taxon>
        <taxon>Eurotiomycetidae</taxon>
        <taxon>Eurotiales</taxon>
        <taxon>Aspergillaceae</taxon>
        <taxon>Aspergillus</taxon>
        <taxon>Aspergillus subgen. Nidulantes</taxon>
    </lineage>
</organism>
<gene>
    <name type="primary">sec23</name>
    <name type="ORF">AN0261</name>
</gene>
<dbReference type="EMBL" id="AACD01000005">
    <property type="protein sequence ID" value="EAA66134.1"/>
    <property type="molecule type" value="Genomic_DNA"/>
</dbReference>
<dbReference type="EMBL" id="BN001308">
    <property type="protein sequence ID" value="CBF89861.1"/>
    <property type="molecule type" value="Genomic_DNA"/>
</dbReference>
<dbReference type="RefSeq" id="XP_657865.1">
    <property type="nucleotide sequence ID" value="XM_652773.1"/>
</dbReference>
<dbReference type="SMR" id="Q5BGR9"/>
<dbReference type="FunCoup" id="Q5BGR9">
    <property type="interactions" value="1015"/>
</dbReference>
<dbReference type="STRING" id="227321.Q5BGR9"/>
<dbReference type="EnsemblFungi" id="CBF89861">
    <property type="protein sequence ID" value="CBF89861"/>
    <property type="gene ID" value="ANIA_00261"/>
</dbReference>
<dbReference type="KEGG" id="ani:ANIA_00261"/>
<dbReference type="VEuPathDB" id="FungiDB:AN0261"/>
<dbReference type="eggNOG" id="KOG1986">
    <property type="taxonomic scope" value="Eukaryota"/>
</dbReference>
<dbReference type="HOGENOM" id="CLU_008658_3_0_1"/>
<dbReference type="InParanoid" id="Q5BGR9"/>
<dbReference type="OMA" id="FPPHYAE"/>
<dbReference type="OrthoDB" id="10256289at2759"/>
<dbReference type="Proteomes" id="UP000000560">
    <property type="component" value="Chromosome VIII"/>
</dbReference>
<dbReference type="GO" id="GO:0030127">
    <property type="term" value="C:COPII vesicle coat"/>
    <property type="evidence" value="ECO:0000318"/>
    <property type="project" value="GO_Central"/>
</dbReference>
<dbReference type="GO" id="GO:0005737">
    <property type="term" value="C:cytoplasm"/>
    <property type="evidence" value="ECO:0000314"/>
    <property type="project" value="AspGD"/>
</dbReference>
<dbReference type="GO" id="GO:0070971">
    <property type="term" value="C:endoplasmic reticulum exit site"/>
    <property type="evidence" value="ECO:0000318"/>
    <property type="project" value="GO_Central"/>
</dbReference>
<dbReference type="GO" id="GO:0005789">
    <property type="term" value="C:endoplasmic reticulum membrane"/>
    <property type="evidence" value="ECO:0007669"/>
    <property type="project" value="UniProtKB-SubCell"/>
</dbReference>
<dbReference type="GO" id="GO:0000139">
    <property type="term" value="C:Golgi membrane"/>
    <property type="evidence" value="ECO:0007669"/>
    <property type="project" value="UniProtKB-SubCell"/>
</dbReference>
<dbReference type="GO" id="GO:0005096">
    <property type="term" value="F:GTPase activator activity"/>
    <property type="evidence" value="ECO:0000318"/>
    <property type="project" value="GO_Central"/>
</dbReference>
<dbReference type="GO" id="GO:0008270">
    <property type="term" value="F:zinc ion binding"/>
    <property type="evidence" value="ECO:0007669"/>
    <property type="project" value="InterPro"/>
</dbReference>
<dbReference type="GO" id="GO:0090110">
    <property type="term" value="P:COPII-coated vesicle cargo loading"/>
    <property type="evidence" value="ECO:0000318"/>
    <property type="project" value="GO_Central"/>
</dbReference>
<dbReference type="GO" id="GO:0006886">
    <property type="term" value="P:intracellular protein transport"/>
    <property type="evidence" value="ECO:0007669"/>
    <property type="project" value="InterPro"/>
</dbReference>
<dbReference type="CDD" id="cd01478">
    <property type="entry name" value="Sec23-like"/>
    <property type="match status" value="1"/>
</dbReference>
<dbReference type="CDD" id="cd11287">
    <property type="entry name" value="Sec23_C"/>
    <property type="match status" value="1"/>
</dbReference>
<dbReference type="FunFam" id="1.20.120.730:FF:000001">
    <property type="entry name" value="Protein transport protein SEC23"/>
    <property type="match status" value="1"/>
</dbReference>
<dbReference type="FunFam" id="2.30.30.380:FF:000001">
    <property type="entry name" value="Protein transport protein SEC23"/>
    <property type="match status" value="1"/>
</dbReference>
<dbReference type="FunFam" id="3.40.20.10:FF:000006">
    <property type="entry name" value="Protein transport protein SEC23"/>
    <property type="match status" value="1"/>
</dbReference>
<dbReference type="FunFam" id="3.40.50.410:FF:000008">
    <property type="entry name" value="Protein transport protein SEC23"/>
    <property type="match status" value="1"/>
</dbReference>
<dbReference type="Gene3D" id="2.60.40.1670">
    <property type="entry name" value="beta-sandwich domain of Sec23/24"/>
    <property type="match status" value="1"/>
</dbReference>
<dbReference type="Gene3D" id="1.20.120.730">
    <property type="entry name" value="Sec23/Sec24 helical domain"/>
    <property type="match status" value="1"/>
</dbReference>
<dbReference type="Gene3D" id="3.40.20.10">
    <property type="entry name" value="Severin"/>
    <property type="match status" value="1"/>
</dbReference>
<dbReference type="Gene3D" id="3.40.50.410">
    <property type="entry name" value="von Willebrand factor, type A domain"/>
    <property type="match status" value="1"/>
</dbReference>
<dbReference type="Gene3D" id="2.30.30.380">
    <property type="entry name" value="Zn-finger domain of Sec23/24"/>
    <property type="match status" value="1"/>
</dbReference>
<dbReference type="InterPro" id="IPR029006">
    <property type="entry name" value="ADF-H/Gelsolin-like_dom_sf"/>
</dbReference>
<dbReference type="InterPro" id="IPR007123">
    <property type="entry name" value="Gelsolin-like_dom"/>
</dbReference>
<dbReference type="InterPro" id="IPR036180">
    <property type="entry name" value="Gelsolin-like_dom_sf"/>
</dbReference>
<dbReference type="InterPro" id="IPR037364">
    <property type="entry name" value="Sec23"/>
</dbReference>
<dbReference type="InterPro" id="IPR006900">
    <property type="entry name" value="Sec23/24_helical_dom"/>
</dbReference>
<dbReference type="InterPro" id="IPR036175">
    <property type="entry name" value="Sec23/24_helical_dom_sf"/>
</dbReference>
<dbReference type="InterPro" id="IPR006896">
    <property type="entry name" value="Sec23/24_trunk_dom"/>
</dbReference>
<dbReference type="InterPro" id="IPR012990">
    <property type="entry name" value="Sec23_24_beta_S"/>
</dbReference>
<dbReference type="InterPro" id="IPR037550">
    <property type="entry name" value="Sec23_C"/>
</dbReference>
<dbReference type="InterPro" id="IPR036465">
    <property type="entry name" value="vWFA_dom_sf"/>
</dbReference>
<dbReference type="InterPro" id="IPR006895">
    <property type="entry name" value="Znf_Sec23_Sec24"/>
</dbReference>
<dbReference type="InterPro" id="IPR036174">
    <property type="entry name" value="Znf_Sec23_Sec24_sf"/>
</dbReference>
<dbReference type="PANTHER" id="PTHR11141">
    <property type="entry name" value="PROTEIN TRANSPORT PROTEIN SEC23"/>
    <property type="match status" value="1"/>
</dbReference>
<dbReference type="PANTHER" id="PTHR11141:SF0">
    <property type="entry name" value="PROTEIN TRANSPORT PROTEIN SEC23"/>
    <property type="match status" value="1"/>
</dbReference>
<dbReference type="Pfam" id="PF00626">
    <property type="entry name" value="Gelsolin"/>
    <property type="match status" value="1"/>
</dbReference>
<dbReference type="Pfam" id="PF08033">
    <property type="entry name" value="Sec23_BS"/>
    <property type="match status" value="1"/>
</dbReference>
<dbReference type="Pfam" id="PF04815">
    <property type="entry name" value="Sec23_helical"/>
    <property type="match status" value="1"/>
</dbReference>
<dbReference type="Pfam" id="PF04811">
    <property type="entry name" value="Sec23_trunk"/>
    <property type="match status" value="1"/>
</dbReference>
<dbReference type="Pfam" id="PF04810">
    <property type="entry name" value="zf-Sec23_Sec24"/>
    <property type="match status" value="1"/>
</dbReference>
<dbReference type="SUPFAM" id="SSF81995">
    <property type="entry name" value="beta-sandwich domain of Sec23/24"/>
    <property type="match status" value="1"/>
</dbReference>
<dbReference type="SUPFAM" id="SSF82754">
    <property type="entry name" value="C-terminal, gelsolin-like domain of Sec23/24"/>
    <property type="match status" value="1"/>
</dbReference>
<dbReference type="SUPFAM" id="SSF81811">
    <property type="entry name" value="Helical domain of Sec23/24"/>
    <property type="match status" value="1"/>
</dbReference>
<dbReference type="SUPFAM" id="SSF53300">
    <property type="entry name" value="vWA-like"/>
    <property type="match status" value="1"/>
</dbReference>
<dbReference type="SUPFAM" id="SSF82919">
    <property type="entry name" value="Zn-finger domain of Sec23/24"/>
    <property type="match status" value="1"/>
</dbReference>
<reference key="1">
    <citation type="journal article" date="2005" name="Nature">
        <title>Sequencing of Aspergillus nidulans and comparative analysis with A. fumigatus and A. oryzae.</title>
        <authorList>
            <person name="Galagan J.E."/>
            <person name="Calvo S.E."/>
            <person name="Cuomo C."/>
            <person name="Ma L.-J."/>
            <person name="Wortman J.R."/>
            <person name="Batzoglou S."/>
            <person name="Lee S.-I."/>
            <person name="Bastuerkmen M."/>
            <person name="Spevak C.C."/>
            <person name="Clutterbuck J."/>
            <person name="Kapitonov V."/>
            <person name="Jurka J."/>
            <person name="Scazzocchio C."/>
            <person name="Farman M.L."/>
            <person name="Butler J."/>
            <person name="Purcell S."/>
            <person name="Harris S."/>
            <person name="Braus G.H."/>
            <person name="Draht O."/>
            <person name="Busch S."/>
            <person name="D'Enfert C."/>
            <person name="Bouchier C."/>
            <person name="Goldman G.H."/>
            <person name="Bell-Pedersen D."/>
            <person name="Griffiths-Jones S."/>
            <person name="Doonan J.H."/>
            <person name="Yu J."/>
            <person name="Vienken K."/>
            <person name="Pain A."/>
            <person name="Freitag M."/>
            <person name="Selker E.U."/>
            <person name="Archer D.B."/>
            <person name="Penalva M.A."/>
            <person name="Oakley B.R."/>
            <person name="Momany M."/>
            <person name="Tanaka T."/>
            <person name="Kumagai T."/>
            <person name="Asai K."/>
            <person name="Machida M."/>
            <person name="Nierman W.C."/>
            <person name="Denning D.W."/>
            <person name="Caddick M.X."/>
            <person name="Hynes M."/>
            <person name="Paoletti M."/>
            <person name="Fischer R."/>
            <person name="Miller B.L."/>
            <person name="Dyer P.S."/>
            <person name="Sachs M.S."/>
            <person name="Osmani S.A."/>
            <person name="Birren B.W."/>
        </authorList>
    </citation>
    <scope>NUCLEOTIDE SEQUENCE [LARGE SCALE GENOMIC DNA]</scope>
    <source>
        <strain>FGSC A4 / ATCC 38163 / CBS 112.46 / NRRL 194 / M139</strain>
    </source>
</reference>
<reference key="2">
    <citation type="journal article" date="2009" name="Fungal Genet. Biol.">
        <title>The 2008 update of the Aspergillus nidulans genome annotation: a community effort.</title>
        <authorList>
            <person name="Wortman J.R."/>
            <person name="Gilsenan J.M."/>
            <person name="Joardar V."/>
            <person name="Deegan J."/>
            <person name="Clutterbuck J."/>
            <person name="Andersen M.R."/>
            <person name="Archer D."/>
            <person name="Bencina M."/>
            <person name="Braus G."/>
            <person name="Coutinho P."/>
            <person name="von Dohren H."/>
            <person name="Doonan J."/>
            <person name="Driessen A.J."/>
            <person name="Durek P."/>
            <person name="Espeso E."/>
            <person name="Fekete E."/>
            <person name="Flipphi M."/>
            <person name="Estrada C.G."/>
            <person name="Geysens S."/>
            <person name="Goldman G."/>
            <person name="de Groot P.W."/>
            <person name="Hansen K."/>
            <person name="Harris S.D."/>
            <person name="Heinekamp T."/>
            <person name="Helmstaedt K."/>
            <person name="Henrissat B."/>
            <person name="Hofmann G."/>
            <person name="Homan T."/>
            <person name="Horio T."/>
            <person name="Horiuchi H."/>
            <person name="James S."/>
            <person name="Jones M."/>
            <person name="Karaffa L."/>
            <person name="Karanyi Z."/>
            <person name="Kato M."/>
            <person name="Keller N."/>
            <person name="Kelly D.E."/>
            <person name="Kiel J.A."/>
            <person name="Kim J.M."/>
            <person name="van der Klei I.J."/>
            <person name="Klis F.M."/>
            <person name="Kovalchuk A."/>
            <person name="Krasevec N."/>
            <person name="Kubicek C.P."/>
            <person name="Liu B."/>
            <person name="Maccabe A."/>
            <person name="Meyer V."/>
            <person name="Mirabito P."/>
            <person name="Miskei M."/>
            <person name="Mos M."/>
            <person name="Mullins J."/>
            <person name="Nelson D.R."/>
            <person name="Nielsen J."/>
            <person name="Oakley B.R."/>
            <person name="Osmani S.A."/>
            <person name="Pakula T."/>
            <person name="Paszewski A."/>
            <person name="Paulsen I."/>
            <person name="Pilsyk S."/>
            <person name="Pocsi I."/>
            <person name="Punt P.J."/>
            <person name="Ram A.F."/>
            <person name="Ren Q."/>
            <person name="Robellet X."/>
            <person name="Robson G."/>
            <person name="Seiboth B."/>
            <person name="van Solingen P."/>
            <person name="Specht T."/>
            <person name="Sun J."/>
            <person name="Taheri-Talesh N."/>
            <person name="Takeshita N."/>
            <person name="Ussery D."/>
            <person name="vanKuyk P.A."/>
            <person name="Visser H."/>
            <person name="van de Vondervoort P.J."/>
            <person name="de Vries R.P."/>
            <person name="Walton J."/>
            <person name="Xiang X."/>
            <person name="Xiong Y."/>
            <person name="Zeng A.P."/>
            <person name="Brandt B.W."/>
            <person name="Cornell M.J."/>
            <person name="van den Hondel C.A."/>
            <person name="Visser J."/>
            <person name="Oliver S.G."/>
            <person name="Turner G."/>
        </authorList>
    </citation>
    <scope>GENOME REANNOTATION</scope>
    <source>
        <strain>FGSC A4 / ATCC 38163 / CBS 112.46 / NRRL 194 / M139</strain>
    </source>
</reference>